<gene>
    <name type="ordered locus">At1g49360</name>
    <name type="ORF">F13F21.21</name>
</gene>
<keyword id="KW-1185">Reference proteome</keyword>
<name>FB49_ARATH</name>
<proteinExistence type="evidence at transcript level"/>
<evidence type="ECO:0000305" key="1"/>
<protein>
    <recommendedName>
        <fullName>F-box protein At1g49360</fullName>
    </recommendedName>
</protein>
<comment type="sequence caution" evidence="1">
    <conflict type="erroneous initiation">
        <sequence resource="EMBL-CDS" id="AAL38364"/>
    </conflict>
</comment>
<dbReference type="EMBL" id="AC007504">
    <property type="protein sequence ID" value="AAD43172.1"/>
    <property type="molecule type" value="Genomic_DNA"/>
</dbReference>
<dbReference type="EMBL" id="CP002684">
    <property type="protein sequence ID" value="AEE32422.1"/>
    <property type="molecule type" value="Genomic_DNA"/>
</dbReference>
<dbReference type="EMBL" id="AY065188">
    <property type="protein sequence ID" value="AAL38364.1"/>
    <property type="status" value="ALT_INIT"/>
    <property type="molecule type" value="mRNA"/>
</dbReference>
<dbReference type="EMBL" id="BT001222">
    <property type="protein sequence ID" value="AAN65109.1"/>
    <property type="molecule type" value="mRNA"/>
</dbReference>
<dbReference type="PIR" id="H96529">
    <property type="entry name" value="H96529"/>
</dbReference>
<dbReference type="RefSeq" id="NP_001323043.1">
    <property type="nucleotide sequence ID" value="NM_001333379.1"/>
</dbReference>
<dbReference type="RefSeq" id="NP_001323045.1">
    <property type="nucleotide sequence ID" value="NM_001333377.1"/>
</dbReference>
<dbReference type="RefSeq" id="NP_001323046.1">
    <property type="nucleotide sequence ID" value="NM_001333378.1"/>
</dbReference>
<dbReference type="RefSeq" id="NP_175361.3">
    <property type="nucleotide sequence ID" value="NM_103826.4"/>
</dbReference>
<dbReference type="SMR" id="Q9XIA2"/>
<dbReference type="FunCoup" id="Q9XIA2">
    <property type="interactions" value="163"/>
</dbReference>
<dbReference type="PaxDb" id="3702-AT1G49360.1"/>
<dbReference type="ProteomicsDB" id="230068"/>
<dbReference type="EnsemblPlants" id="AT1G49360.1">
    <property type="protein sequence ID" value="AT1G49360.1"/>
    <property type="gene ID" value="AT1G49360"/>
</dbReference>
<dbReference type="GeneID" id="841359"/>
<dbReference type="Gramene" id="AT1G49360.1">
    <property type="protein sequence ID" value="AT1G49360.1"/>
    <property type="gene ID" value="AT1G49360"/>
</dbReference>
<dbReference type="KEGG" id="ath:AT1G49360"/>
<dbReference type="Araport" id="AT1G49360"/>
<dbReference type="TAIR" id="AT1G49360"/>
<dbReference type="eggNOG" id="ENOG502QWFR">
    <property type="taxonomic scope" value="Eukaryota"/>
</dbReference>
<dbReference type="HOGENOM" id="CLU_060427_0_0_1"/>
<dbReference type="InParanoid" id="Q9XIA2"/>
<dbReference type="PhylomeDB" id="Q9XIA2"/>
<dbReference type="PRO" id="PR:Q9XIA2"/>
<dbReference type="Proteomes" id="UP000006548">
    <property type="component" value="Chromosome 1"/>
</dbReference>
<dbReference type="ExpressionAtlas" id="Q9XIA2">
    <property type="expression patterns" value="baseline and differential"/>
</dbReference>
<dbReference type="CDD" id="cd09917">
    <property type="entry name" value="F-box_SF"/>
    <property type="match status" value="1"/>
</dbReference>
<dbReference type="Gene3D" id="1.20.1280.50">
    <property type="match status" value="1"/>
</dbReference>
<dbReference type="InterPro" id="IPR036047">
    <property type="entry name" value="F-box-like_dom_sf"/>
</dbReference>
<dbReference type="InterPro" id="IPR001810">
    <property type="entry name" value="F-box_dom"/>
</dbReference>
<dbReference type="InterPro" id="IPR011043">
    <property type="entry name" value="Gal_Oxase/kelch_b-propeller"/>
</dbReference>
<dbReference type="InterPro" id="IPR005174">
    <property type="entry name" value="KIB1-4_b-propeller"/>
</dbReference>
<dbReference type="PANTHER" id="PTHR33127:SF88">
    <property type="entry name" value="F-BOX DOMAIN-CONTAINING PROTEIN"/>
    <property type="match status" value="1"/>
</dbReference>
<dbReference type="PANTHER" id="PTHR33127">
    <property type="entry name" value="TRANSMEMBRANE PROTEIN"/>
    <property type="match status" value="1"/>
</dbReference>
<dbReference type="Pfam" id="PF03478">
    <property type="entry name" value="Beta-prop_KIB1-4"/>
    <property type="match status" value="1"/>
</dbReference>
<dbReference type="Pfam" id="PF00646">
    <property type="entry name" value="F-box"/>
    <property type="match status" value="1"/>
</dbReference>
<dbReference type="SMART" id="SM00256">
    <property type="entry name" value="FBOX"/>
    <property type="match status" value="1"/>
</dbReference>
<dbReference type="SUPFAM" id="SSF81383">
    <property type="entry name" value="F-box domain"/>
    <property type="match status" value="1"/>
</dbReference>
<dbReference type="SUPFAM" id="SSF50965">
    <property type="entry name" value="Galactose oxidase, central domain"/>
    <property type="match status" value="1"/>
</dbReference>
<feature type="chain" id="PRO_0000283323" description="F-box protein At1g49360">
    <location>
        <begin position="1"/>
        <end position="481"/>
    </location>
</feature>
<feature type="domain" description="F-box">
    <location>
        <begin position="105"/>
        <end position="156"/>
    </location>
</feature>
<accession>Q9XIA2</accession>
<accession>Q8VZ76</accession>
<reference key="1">
    <citation type="journal article" date="2000" name="Nature">
        <title>Sequence and analysis of chromosome 1 of the plant Arabidopsis thaliana.</title>
        <authorList>
            <person name="Theologis A."/>
            <person name="Ecker J.R."/>
            <person name="Palm C.J."/>
            <person name="Federspiel N.A."/>
            <person name="Kaul S."/>
            <person name="White O."/>
            <person name="Alonso J."/>
            <person name="Altafi H."/>
            <person name="Araujo R."/>
            <person name="Bowman C.L."/>
            <person name="Brooks S.Y."/>
            <person name="Buehler E."/>
            <person name="Chan A."/>
            <person name="Chao Q."/>
            <person name="Chen H."/>
            <person name="Cheuk R.F."/>
            <person name="Chin C.W."/>
            <person name="Chung M.K."/>
            <person name="Conn L."/>
            <person name="Conway A.B."/>
            <person name="Conway A.R."/>
            <person name="Creasy T.H."/>
            <person name="Dewar K."/>
            <person name="Dunn P."/>
            <person name="Etgu P."/>
            <person name="Feldblyum T.V."/>
            <person name="Feng J.-D."/>
            <person name="Fong B."/>
            <person name="Fujii C.Y."/>
            <person name="Gill J.E."/>
            <person name="Goldsmith A.D."/>
            <person name="Haas B."/>
            <person name="Hansen N.F."/>
            <person name="Hughes B."/>
            <person name="Huizar L."/>
            <person name="Hunter J.L."/>
            <person name="Jenkins J."/>
            <person name="Johnson-Hopson C."/>
            <person name="Khan S."/>
            <person name="Khaykin E."/>
            <person name="Kim C.J."/>
            <person name="Koo H.L."/>
            <person name="Kremenetskaia I."/>
            <person name="Kurtz D.B."/>
            <person name="Kwan A."/>
            <person name="Lam B."/>
            <person name="Langin-Hooper S."/>
            <person name="Lee A."/>
            <person name="Lee J.M."/>
            <person name="Lenz C.A."/>
            <person name="Li J.H."/>
            <person name="Li Y.-P."/>
            <person name="Lin X."/>
            <person name="Liu S.X."/>
            <person name="Liu Z.A."/>
            <person name="Luros J.S."/>
            <person name="Maiti R."/>
            <person name="Marziali A."/>
            <person name="Militscher J."/>
            <person name="Miranda M."/>
            <person name="Nguyen M."/>
            <person name="Nierman W.C."/>
            <person name="Osborne B.I."/>
            <person name="Pai G."/>
            <person name="Peterson J."/>
            <person name="Pham P.K."/>
            <person name="Rizzo M."/>
            <person name="Rooney T."/>
            <person name="Rowley D."/>
            <person name="Sakano H."/>
            <person name="Salzberg S.L."/>
            <person name="Schwartz J.R."/>
            <person name="Shinn P."/>
            <person name="Southwick A.M."/>
            <person name="Sun H."/>
            <person name="Tallon L.J."/>
            <person name="Tambunga G."/>
            <person name="Toriumi M.J."/>
            <person name="Town C.D."/>
            <person name="Utterback T."/>
            <person name="Van Aken S."/>
            <person name="Vaysberg M."/>
            <person name="Vysotskaia V.S."/>
            <person name="Walker M."/>
            <person name="Wu D."/>
            <person name="Yu G."/>
            <person name="Fraser C.M."/>
            <person name="Venter J.C."/>
            <person name="Davis R.W."/>
        </authorList>
    </citation>
    <scope>NUCLEOTIDE SEQUENCE [LARGE SCALE GENOMIC DNA]</scope>
    <source>
        <strain>cv. Columbia</strain>
    </source>
</reference>
<reference key="2">
    <citation type="journal article" date="2017" name="Plant J.">
        <title>Araport11: a complete reannotation of the Arabidopsis thaliana reference genome.</title>
        <authorList>
            <person name="Cheng C.Y."/>
            <person name="Krishnakumar V."/>
            <person name="Chan A.P."/>
            <person name="Thibaud-Nissen F."/>
            <person name="Schobel S."/>
            <person name="Town C.D."/>
        </authorList>
    </citation>
    <scope>GENOME REANNOTATION</scope>
    <source>
        <strain>cv. Columbia</strain>
    </source>
</reference>
<reference key="3">
    <citation type="journal article" date="2003" name="Science">
        <title>Empirical analysis of transcriptional activity in the Arabidopsis genome.</title>
        <authorList>
            <person name="Yamada K."/>
            <person name="Lim J."/>
            <person name="Dale J.M."/>
            <person name="Chen H."/>
            <person name="Shinn P."/>
            <person name="Palm C.J."/>
            <person name="Southwick A.M."/>
            <person name="Wu H.C."/>
            <person name="Kim C.J."/>
            <person name="Nguyen M."/>
            <person name="Pham P.K."/>
            <person name="Cheuk R.F."/>
            <person name="Karlin-Newmann G."/>
            <person name="Liu S.X."/>
            <person name="Lam B."/>
            <person name="Sakano H."/>
            <person name="Wu T."/>
            <person name="Yu G."/>
            <person name="Miranda M."/>
            <person name="Quach H.L."/>
            <person name="Tripp M."/>
            <person name="Chang C.H."/>
            <person name="Lee J.M."/>
            <person name="Toriumi M.J."/>
            <person name="Chan M.M."/>
            <person name="Tang C.C."/>
            <person name="Onodera C.S."/>
            <person name="Deng J.M."/>
            <person name="Akiyama K."/>
            <person name="Ansari Y."/>
            <person name="Arakawa T."/>
            <person name="Banh J."/>
            <person name="Banno F."/>
            <person name="Bowser L."/>
            <person name="Brooks S.Y."/>
            <person name="Carninci P."/>
            <person name="Chao Q."/>
            <person name="Choy N."/>
            <person name="Enju A."/>
            <person name="Goldsmith A.D."/>
            <person name="Gurjal M."/>
            <person name="Hansen N.F."/>
            <person name="Hayashizaki Y."/>
            <person name="Johnson-Hopson C."/>
            <person name="Hsuan V.W."/>
            <person name="Iida K."/>
            <person name="Karnes M."/>
            <person name="Khan S."/>
            <person name="Koesema E."/>
            <person name="Ishida J."/>
            <person name="Jiang P.X."/>
            <person name="Jones T."/>
            <person name="Kawai J."/>
            <person name="Kamiya A."/>
            <person name="Meyers C."/>
            <person name="Nakajima M."/>
            <person name="Narusaka M."/>
            <person name="Seki M."/>
            <person name="Sakurai T."/>
            <person name="Satou M."/>
            <person name="Tamse R."/>
            <person name="Vaysberg M."/>
            <person name="Wallender E.K."/>
            <person name="Wong C."/>
            <person name="Yamamura Y."/>
            <person name="Yuan S."/>
            <person name="Shinozaki K."/>
            <person name="Davis R.W."/>
            <person name="Theologis A."/>
            <person name="Ecker J.R."/>
        </authorList>
    </citation>
    <scope>NUCLEOTIDE SEQUENCE [LARGE SCALE MRNA] OF 10-481</scope>
    <source>
        <strain>cv. Columbia</strain>
    </source>
</reference>
<organism>
    <name type="scientific">Arabidopsis thaliana</name>
    <name type="common">Mouse-ear cress</name>
    <dbReference type="NCBI Taxonomy" id="3702"/>
    <lineage>
        <taxon>Eukaryota</taxon>
        <taxon>Viridiplantae</taxon>
        <taxon>Streptophyta</taxon>
        <taxon>Embryophyta</taxon>
        <taxon>Tracheophyta</taxon>
        <taxon>Spermatophyta</taxon>
        <taxon>Magnoliopsida</taxon>
        <taxon>eudicotyledons</taxon>
        <taxon>Gunneridae</taxon>
        <taxon>Pentapetalae</taxon>
        <taxon>rosids</taxon>
        <taxon>malvids</taxon>
        <taxon>Brassicales</taxon>
        <taxon>Brassicaceae</taxon>
        <taxon>Camelineae</taxon>
        <taxon>Arabidopsis</taxon>
    </lineage>
</organism>
<sequence>MACRAKELVSLILYKICNPKRSDSKIEEHVEEVEDLKAEAELFRSGSKIEKHVEELEDLKAEAELFRLKAISGTEELKAVADVKRLRTILENNSGTSEECKGEMLKEDLFLPSDLVRLILSRLSFKDNIRSSTVCKAWGDIAASVRVKSRRCWLLYHDAFQDKGVSYGFFDPVEKKKTKEMNLPELSKSSGILYSKDGWLLMNDSLSLIADMYFFNPFTRERIDLPRNRIMESVHTNFAFSCAPTKKSCLVFGINNISSSVAIKISTWRPGATTWLHEDFPNLFPSYFRRLGNILYSDGLFYTASETALGVFDPTARTWNVLPVQPIPMAPRSIRWMTEYEGHIFLVDASSLEPMVYRLNRLESVWEKKETLDGSSIFLSDGSCVMTYGLTGSMSNILYFWSRFINERRSTKSPCPFSRNHPYKYSLYSRSSCEDPEGYYFEYLTWGQKVGVWIEPPHSISIYDYSILDPSEAVNTEYVFI</sequence>